<comment type="miscellaneous">
    <text evidence="1">Almost completely overlaps PGK1.</text>
</comment>
<comment type="caution">
    <text evidence="2">Product of a dubious gene prediction unlikely to encode a functional protein. Because of that it is not part of the S.cerevisiae S288c complete/reference proteome set.</text>
</comment>
<dbReference type="EMBL" id="X59720">
    <property type="protein sequence ID" value="CAA42330.1"/>
    <property type="molecule type" value="Genomic_DNA"/>
</dbReference>
<dbReference type="PIR" id="S19423">
    <property type="entry name" value="S19423"/>
</dbReference>
<dbReference type="STRING" id="4932.YCR013C"/>
<dbReference type="PaxDb" id="4932-YCR013C"/>
<dbReference type="EnsemblFungi" id="YCR013C_mRNA">
    <property type="protein sequence ID" value="YCR013C"/>
    <property type="gene ID" value="YCR013C"/>
</dbReference>
<dbReference type="AGR" id="SGD:S000000606"/>
<dbReference type="SGD" id="S000000606">
    <property type="gene designation" value="YCR013C"/>
</dbReference>
<dbReference type="eggNOG" id="ENOG502SAW7">
    <property type="taxonomic scope" value="Eukaryota"/>
</dbReference>
<dbReference type="HOGENOM" id="CLU_111700_0_0_1"/>
<feature type="chain" id="PRO_0000202561" description="Putative uncharacterized protein YCR013C">
    <location>
        <begin position="1"/>
        <end position="215"/>
    </location>
</feature>
<reference key="1">
    <citation type="journal article" date="1992" name="Yeast">
        <title>The complete sequence of a 10.8 kb segment distal of SUF2 on the right arm of chromosome III from Saccharomyces cerevisiae reveals seven open reading frames including the RVS161, ADP1 and PGK genes.</title>
        <authorList>
            <person name="Skala J."/>
            <person name="Purnelle B."/>
            <person name="Goffeau A."/>
        </authorList>
    </citation>
    <scope>NUCLEOTIDE SEQUENCE [GENOMIC DNA]</scope>
</reference>
<reference key="2">
    <citation type="journal article" date="1992" name="Nature">
        <title>The complete DNA sequence of yeast chromosome III.</title>
        <authorList>
            <person name="Oliver S.G."/>
            <person name="van der Aart Q.J.M."/>
            <person name="Agostoni-Carbone M.L."/>
            <person name="Aigle M."/>
            <person name="Alberghina L."/>
            <person name="Alexandraki D."/>
            <person name="Antoine G."/>
            <person name="Anwar R."/>
            <person name="Ballesta J.P.G."/>
            <person name="Benit P."/>
            <person name="Berben G."/>
            <person name="Bergantino E."/>
            <person name="Biteau N."/>
            <person name="Bolle P.-A."/>
            <person name="Bolotin-Fukuhara M."/>
            <person name="Brown A."/>
            <person name="Brown A.J.P."/>
            <person name="Buhler J.-M."/>
            <person name="Carcano C."/>
            <person name="Carignani G."/>
            <person name="Cederberg H."/>
            <person name="Chanet R."/>
            <person name="Contreras R."/>
            <person name="Crouzet M."/>
            <person name="Daignan-Fornier B."/>
            <person name="Defoor E."/>
            <person name="Delgado M.D."/>
            <person name="Demolder J."/>
            <person name="Doira C."/>
            <person name="Dubois E."/>
            <person name="Dujon B."/>
            <person name="Duesterhoeft A."/>
            <person name="Erdmann D."/>
            <person name="Esteban M."/>
            <person name="Fabre F."/>
            <person name="Fairhead C."/>
            <person name="Faye G."/>
            <person name="Feldmann H."/>
            <person name="Fiers W."/>
            <person name="Francingues-Gaillard M.-C."/>
            <person name="Franco L."/>
            <person name="Frontali L."/>
            <person name="Fukuhara H."/>
            <person name="Fuller L.J."/>
            <person name="Galland P."/>
            <person name="Gent M.E."/>
            <person name="Gigot D."/>
            <person name="Gilliquet V."/>
            <person name="Glansdorff N."/>
            <person name="Goffeau A."/>
            <person name="Grenson M."/>
            <person name="Grisanti P."/>
            <person name="Grivell L.A."/>
            <person name="de Haan M."/>
            <person name="Haasemann M."/>
            <person name="Hatat D."/>
            <person name="Hoenicka J."/>
            <person name="Hegemann J.H."/>
            <person name="Herbert C.J."/>
            <person name="Hilger F."/>
            <person name="Hohmann S."/>
            <person name="Hollenberg C.P."/>
            <person name="Huse K."/>
            <person name="Iborra F."/>
            <person name="Indge K.J."/>
            <person name="Isono K."/>
            <person name="Jacq C."/>
            <person name="Jacquet M."/>
            <person name="James C.M."/>
            <person name="Jauniaux J.-C."/>
            <person name="Jia Y."/>
            <person name="Jimenez A."/>
            <person name="Kelly A."/>
            <person name="Kleinhans U."/>
            <person name="Kreisl P."/>
            <person name="Lanfranchi G."/>
            <person name="Lewis C."/>
            <person name="van der Linden C.G."/>
            <person name="Lucchini G."/>
            <person name="Lutzenkirchen K."/>
            <person name="Maat M.J."/>
            <person name="Mallet L."/>
            <person name="Mannhaupt G."/>
            <person name="Martegani E."/>
            <person name="Mathieu A."/>
            <person name="Maurer C.T.C."/>
            <person name="McConnell D."/>
            <person name="McKee R.A."/>
            <person name="Messenguy F."/>
            <person name="Mewes H.-W."/>
            <person name="Molemans F."/>
            <person name="Montague M.A."/>
            <person name="Muzi Falconi M."/>
            <person name="Navas L."/>
            <person name="Newlon C.S."/>
            <person name="Noone D."/>
            <person name="Pallier C."/>
            <person name="Panzeri L."/>
            <person name="Pearson B.M."/>
            <person name="Perea J."/>
            <person name="Philippsen P."/>
            <person name="Pierard A."/>
            <person name="Planta R.J."/>
            <person name="Plevani P."/>
            <person name="Poetsch B."/>
            <person name="Pohl F.M."/>
            <person name="Purnelle B."/>
            <person name="Ramezani Rad M."/>
            <person name="Rasmussen S.W."/>
            <person name="Raynal A."/>
            <person name="Remacha M.A."/>
            <person name="Richterich P."/>
            <person name="Roberts A.B."/>
            <person name="Rodriguez F."/>
            <person name="Sanz E."/>
            <person name="Schaaff-Gerstenschlaeger I."/>
            <person name="Scherens B."/>
            <person name="Schweitzer B."/>
            <person name="Shu Y."/>
            <person name="Skala J."/>
            <person name="Slonimski P.P."/>
            <person name="Sor F."/>
            <person name="Soustelle C."/>
            <person name="Spiegelberg R."/>
            <person name="Stateva L.I."/>
            <person name="Steensma H.Y."/>
            <person name="Steiner S."/>
            <person name="Thierry A."/>
            <person name="Thireos G."/>
            <person name="Tzermia M."/>
            <person name="Urrestarazu L.A."/>
            <person name="Valle G."/>
            <person name="Vetter I."/>
            <person name="van Vliet-Reedijk J.C."/>
            <person name="Voet M."/>
            <person name="Volckaert G."/>
            <person name="Vreken P."/>
            <person name="Wang H."/>
            <person name="Warmington J.R."/>
            <person name="von Wettstein D."/>
            <person name="Wicksteed B.L."/>
            <person name="Wilson C."/>
            <person name="Wurst H."/>
            <person name="Xu G."/>
            <person name="Yoshikawa A."/>
            <person name="Zimmermann F.K."/>
            <person name="Sgouros J.G."/>
        </authorList>
    </citation>
    <scope>NUCLEOTIDE SEQUENCE [LARGE SCALE GENOMIC DNA]</scope>
    <source>
        <strain>ATCC 204508 / S288c</strain>
    </source>
</reference>
<reference key="3">
    <citation type="journal article" date="2014" name="G3 (Bethesda)">
        <title>The reference genome sequence of Saccharomyces cerevisiae: Then and now.</title>
        <authorList>
            <person name="Engel S.R."/>
            <person name="Dietrich F.S."/>
            <person name="Fisk D.G."/>
            <person name="Binkley G."/>
            <person name="Balakrishnan R."/>
            <person name="Costanzo M.C."/>
            <person name="Dwight S.S."/>
            <person name="Hitz B.C."/>
            <person name="Karra K."/>
            <person name="Nash R.S."/>
            <person name="Weng S."/>
            <person name="Wong E.D."/>
            <person name="Lloyd P."/>
            <person name="Skrzypek M.S."/>
            <person name="Miyasato S.R."/>
            <person name="Simison M."/>
            <person name="Cherry J.M."/>
        </authorList>
    </citation>
    <scope>GENOME REANNOTATION</scope>
    <source>
        <strain>ATCC 204508 / S288c</strain>
    </source>
</reference>
<sequence length="215" mass="22780">MGKEKRKKLIYRFQFNSIYFFSDKKATPGNSLPSNNSKEAPPPVETWEILSVTPYFLATVAVSPPPMMTVLPAAELLTTSSNKALVPAANFSNSKTPGGPFQTMVLAFATVAANNFLDSGPLSNPCQPAGIPSLSVTVLVLASAEKASAMMKSTGKTTSTPLALAFSINFGTISAPALSKMESPISVFSKTFLKVKAIPPPMMIESTLSNKLSIN</sequence>
<proteinExistence type="uncertain"/>
<accession>P25614</accession>
<protein>
    <recommendedName>
        <fullName>Putative uncharacterized protein YCR013C</fullName>
    </recommendedName>
</protein>
<name>YCQ3_YEAST</name>
<evidence type="ECO:0000305" key="1"/>
<evidence type="ECO:0000305" key="2">
    <source>
    </source>
</evidence>
<gene>
    <name type="ordered locus">YCR013C</name>
    <name type="ORF">YCR13C</name>
</gene>
<organism>
    <name type="scientific">Saccharomyces cerevisiae (strain ATCC 204508 / S288c)</name>
    <name type="common">Baker's yeast</name>
    <dbReference type="NCBI Taxonomy" id="559292"/>
    <lineage>
        <taxon>Eukaryota</taxon>
        <taxon>Fungi</taxon>
        <taxon>Dikarya</taxon>
        <taxon>Ascomycota</taxon>
        <taxon>Saccharomycotina</taxon>
        <taxon>Saccharomycetes</taxon>
        <taxon>Saccharomycetales</taxon>
        <taxon>Saccharomycetaceae</taxon>
        <taxon>Saccharomyces</taxon>
    </lineage>
</organism>